<sequence length="321" mass="35364">MAEKGMDLNRFILEEERKHPSASGSLSLALMAIESAAKIIASHVRMAGLADVLGQAGKVNVQGEEVQKLDELSNTVMLQHLLDSGQFYALASEELNEPVYSHKGKDARYVIAFDPLDGSSNIDVNVSIGTIFSIHRRIGDGIENFLQEGYKQVAAGYIIYGSSVMFVLTTGNGVNGFTYDPAVGMFLLSHPDIKIPEKGKIYSINEANAHKWTDEGLVRYIDKLKEEGYTSRYIGSMVADVHRTLIKGGMFGYPADRKNKSGKLRLLYEAAPMAYIIKQAGGKSTTGKMDILDVKPEDIHQRVPVFIGSRKEIDQLLEFIS</sequence>
<accession>C0QTP7</accession>
<proteinExistence type="inferred from homology"/>
<comment type="catalytic activity">
    <reaction evidence="1">
        <text>beta-D-fructose 1,6-bisphosphate + H2O = beta-D-fructose 6-phosphate + phosphate</text>
        <dbReference type="Rhea" id="RHEA:11064"/>
        <dbReference type="ChEBI" id="CHEBI:15377"/>
        <dbReference type="ChEBI" id="CHEBI:32966"/>
        <dbReference type="ChEBI" id="CHEBI:43474"/>
        <dbReference type="ChEBI" id="CHEBI:57634"/>
        <dbReference type="EC" id="3.1.3.11"/>
    </reaction>
</comment>
<comment type="cofactor">
    <cofactor evidence="1">
        <name>Mg(2+)</name>
        <dbReference type="ChEBI" id="CHEBI:18420"/>
    </cofactor>
    <text evidence="1">Binds 2 magnesium ions per subunit.</text>
</comment>
<comment type="pathway">
    <text evidence="1">Carbohydrate biosynthesis; gluconeogenesis.</text>
</comment>
<comment type="subunit">
    <text evidence="1">Homotetramer.</text>
</comment>
<comment type="subcellular location">
    <subcellularLocation>
        <location evidence="1">Cytoplasm</location>
    </subcellularLocation>
</comment>
<comment type="similarity">
    <text evidence="1">Belongs to the FBPase class 1 family.</text>
</comment>
<dbReference type="EC" id="3.1.3.11" evidence="1"/>
<dbReference type="EMBL" id="CP001230">
    <property type="protein sequence ID" value="ACO04169.1"/>
    <property type="molecule type" value="Genomic_DNA"/>
</dbReference>
<dbReference type="RefSeq" id="WP_012676407.1">
    <property type="nucleotide sequence ID" value="NC_012440.1"/>
</dbReference>
<dbReference type="SMR" id="C0QTP7"/>
<dbReference type="STRING" id="123214.PERMA_0268"/>
<dbReference type="PaxDb" id="123214-PERMA_0268"/>
<dbReference type="KEGG" id="pmx:PERMA_0268"/>
<dbReference type="eggNOG" id="COG0158">
    <property type="taxonomic scope" value="Bacteria"/>
</dbReference>
<dbReference type="HOGENOM" id="CLU_039977_2_2_0"/>
<dbReference type="OrthoDB" id="9806756at2"/>
<dbReference type="UniPathway" id="UPA00138"/>
<dbReference type="Proteomes" id="UP000001366">
    <property type="component" value="Chromosome"/>
</dbReference>
<dbReference type="GO" id="GO:0005829">
    <property type="term" value="C:cytosol"/>
    <property type="evidence" value="ECO:0007669"/>
    <property type="project" value="TreeGrafter"/>
</dbReference>
<dbReference type="GO" id="GO:0042132">
    <property type="term" value="F:fructose 1,6-bisphosphate 1-phosphatase activity"/>
    <property type="evidence" value="ECO:0007669"/>
    <property type="project" value="UniProtKB-UniRule"/>
</dbReference>
<dbReference type="GO" id="GO:0000287">
    <property type="term" value="F:magnesium ion binding"/>
    <property type="evidence" value="ECO:0007669"/>
    <property type="project" value="UniProtKB-UniRule"/>
</dbReference>
<dbReference type="GO" id="GO:0030388">
    <property type="term" value="P:fructose 1,6-bisphosphate metabolic process"/>
    <property type="evidence" value="ECO:0007669"/>
    <property type="project" value="TreeGrafter"/>
</dbReference>
<dbReference type="GO" id="GO:0006002">
    <property type="term" value="P:fructose 6-phosphate metabolic process"/>
    <property type="evidence" value="ECO:0007669"/>
    <property type="project" value="TreeGrafter"/>
</dbReference>
<dbReference type="GO" id="GO:0006000">
    <property type="term" value="P:fructose metabolic process"/>
    <property type="evidence" value="ECO:0007669"/>
    <property type="project" value="TreeGrafter"/>
</dbReference>
<dbReference type="GO" id="GO:0006094">
    <property type="term" value="P:gluconeogenesis"/>
    <property type="evidence" value="ECO:0007669"/>
    <property type="project" value="UniProtKB-UniRule"/>
</dbReference>
<dbReference type="GO" id="GO:0005986">
    <property type="term" value="P:sucrose biosynthetic process"/>
    <property type="evidence" value="ECO:0007669"/>
    <property type="project" value="TreeGrafter"/>
</dbReference>
<dbReference type="CDD" id="cd00354">
    <property type="entry name" value="FBPase"/>
    <property type="match status" value="1"/>
</dbReference>
<dbReference type="FunFam" id="3.30.540.10:FF:000002">
    <property type="entry name" value="Fructose-1,6-bisphosphatase class 1"/>
    <property type="match status" value="1"/>
</dbReference>
<dbReference type="FunFam" id="3.40.190.80:FF:000001">
    <property type="entry name" value="Fructose-1,6-bisphosphatase class 1"/>
    <property type="match status" value="1"/>
</dbReference>
<dbReference type="Gene3D" id="3.40.190.80">
    <property type="match status" value="1"/>
</dbReference>
<dbReference type="Gene3D" id="3.30.540.10">
    <property type="entry name" value="Fructose-1,6-Bisphosphatase, subunit A, domain 1"/>
    <property type="match status" value="1"/>
</dbReference>
<dbReference type="HAMAP" id="MF_01855">
    <property type="entry name" value="FBPase_class1"/>
    <property type="match status" value="1"/>
</dbReference>
<dbReference type="InterPro" id="IPR044015">
    <property type="entry name" value="FBPase_C_dom"/>
</dbReference>
<dbReference type="InterPro" id="IPR000146">
    <property type="entry name" value="FBPase_class-1"/>
</dbReference>
<dbReference type="InterPro" id="IPR033391">
    <property type="entry name" value="FBPase_N"/>
</dbReference>
<dbReference type="InterPro" id="IPR028343">
    <property type="entry name" value="FBPtase"/>
</dbReference>
<dbReference type="InterPro" id="IPR020548">
    <property type="entry name" value="Fructose_bisphosphatase_AS"/>
</dbReference>
<dbReference type="NCBIfam" id="NF006778">
    <property type="entry name" value="PRK09293.1-1"/>
    <property type="match status" value="1"/>
</dbReference>
<dbReference type="NCBIfam" id="NF006779">
    <property type="entry name" value="PRK09293.1-3"/>
    <property type="match status" value="1"/>
</dbReference>
<dbReference type="PANTHER" id="PTHR11556">
    <property type="entry name" value="FRUCTOSE-1,6-BISPHOSPHATASE-RELATED"/>
    <property type="match status" value="1"/>
</dbReference>
<dbReference type="PANTHER" id="PTHR11556:SF35">
    <property type="entry name" value="SEDOHEPTULOSE-1,7-BISPHOSPHATASE, CHLOROPLASTIC"/>
    <property type="match status" value="1"/>
</dbReference>
<dbReference type="Pfam" id="PF00316">
    <property type="entry name" value="FBPase"/>
    <property type="match status" value="1"/>
</dbReference>
<dbReference type="Pfam" id="PF18913">
    <property type="entry name" value="FBPase_C"/>
    <property type="match status" value="1"/>
</dbReference>
<dbReference type="PIRSF" id="PIRSF500210">
    <property type="entry name" value="FBPtase"/>
    <property type="match status" value="1"/>
</dbReference>
<dbReference type="PIRSF" id="PIRSF000904">
    <property type="entry name" value="FBPtase_SBPase"/>
    <property type="match status" value="1"/>
</dbReference>
<dbReference type="PRINTS" id="PR00115">
    <property type="entry name" value="F16BPHPHTASE"/>
</dbReference>
<dbReference type="SUPFAM" id="SSF56655">
    <property type="entry name" value="Carbohydrate phosphatase"/>
    <property type="match status" value="1"/>
</dbReference>
<dbReference type="PROSITE" id="PS00124">
    <property type="entry name" value="FBPASE"/>
    <property type="match status" value="1"/>
</dbReference>
<reference key="1">
    <citation type="journal article" date="2009" name="J. Bacteriol.">
        <title>Complete and draft genome sequences of six members of the Aquificales.</title>
        <authorList>
            <person name="Reysenbach A.-L."/>
            <person name="Hamamura N."/>
            <person name="Podar M."/>
            <person name="Griffiths E."/>
            <person name="Ferreira S."/>
            <person name="Hochstein R."/>
            <person name="Heidelberg J."/>
            <person name="Johnson J."/>
            <person name="Mead D."/>
            <person name="Pohorille A."/>
            <person name="Sarmiento M."/>
            <person name="Schweighofer K."/>
            <person name="Seshadri R."/>
            <person name="Voytek M.A."/>
        </authorList>
    </citation>
    <scope>NUCLEOTIDE SEQUENCE [LARGE SCALE GENOMIC DNA]</scope>
    <source>
        <strain>DSM 14350 / EX-H1</strain>
    </source>
</reference>
<evidence type="ECO:0000255" key="1">
    <source>
        <dbReference type="HAMAP-Rule" id="MF_01855"/>
    </source>
</evidence>
<gene>
    <name evidence="1" type="primary">fbp</name>
    <name type="ordered locus">PERMA_0268</name>
</gene>
<name>F16PA_PERMH</name>
<feature type="chain" id="PRO_1000216149" description="Fructose-1,6-bisphosphatase class 1">
    <location>
        <begin position="1"/>
        <end position="321"/>
    </location>
</feature>
<feature type="binding site" evidence="1">
    <location>
        <position position="93"/>
    </location>
    <ligand>
        <name>Mg(2+)</name>
        <dbReference type="ChEBI" id="CHEBI:18420"/>
        <label>1</label>
    </ligand>
</feature>
<feature type="binding site" evidence="1">
    <location>
        <position position="114"/>
    </location>
    <ligand>
        <name>Mg(2+)</name>
        <dbReference type="ChEBI" id="CHEBI:18420"/>
        <label>1</label>
    </ligand>
</feature>
<feature type="binding site" evidence="1">
    <location>
        <position position="114"/>
    </location>
    <ligand>
        <name>Mg(2+)</name>
        <dbReference type="ChEBI" id="CHEBI:18420"/>
        <label>2</label>
    </ligand>
</feature>
<feature type="binding site" evidence="1">
    <location>
        <position position="116"/>
    </location>
    <ligand>
        <name>Mg(2+)</name>
        <dbReference type="ChEBI" id="CHEBI:18420"/>
        <label>1</label>
    </ligand>
</feature>
<feature type="binding site" evidence="1">
    <location>
        <begin position="117"/>
        <end position="120"/>
    </location>
    <ligand>
        <name>substrate</name>
    </ligand>
</feature>
<feature type="binding site" evidence="1">
    <location>
        <position position="117"/>
    </location>
    <ligand>
        <name>Mg(2+)</name>
        <dbReference type="ChEBI" id="CHEBI:18420"/>
        <label>2</label>
    </ligand>
</feature>
<feature type="binding site" evidence="1">
    <location>
        <position position="205"/>
    </location>
    <ligand>
        <name>substrate</name>
    </ligand>
</feature>
<feature type="binding site" evidence="1">
    <location>
        <position position="233"/>
    </location>
    <ligand>
        <name>substrate</name>
    </ligand>
</feature>
<feature type="binding site" evidence="1">
    <location>
        <position position="263"/>
    </location>
    <ligand>
        <name>substrate</name>
    </ligand>
</feature>
<feature type="binding site" evidence="1">
    <location>
        <position position="269"/>
    </location>
    <ligand>
        <name>Mg(2+)</name>
        <dbReference type="ChEBI" id="CHEBI:18420"/>
        <label>2</label>
    </ligand>
</feature>
<protein>
    <recommendedName>
        <fullName evidence="1">Fructose-1,6-bisphosphatase class 1</fullName>
        <shortName evidence="1">FBPase class 1</shortName>
        <ecNumber evidence="1">3.1.3.11</ecNumber>
    </recommendedName>
    <alternativeName>
        <fullName evidence="1">D-fructose-1,6-bisphosphate 1-phosphohydrolase class 1</fullName>
    </alternativeName>
</protein>
<organism>
    <name type="scientific">Persephonella marina (strain DSM 14350 / EX-H1)</name>
    <dbReference type="NCBI Taxonomy" id="123214"/>
    <lineage>
        <taxon>Bacteria</taxon>
        <taxon>Pseudomonadati</taxon>
        <taxon>Aquificota</taxon>
        <taxon>Aquificia</taxon>
        <taxon>Aquificales</taxon>
        <taxon>Hydrogenothermaceae</taxon>
        <taxon>Persephonella</taxon>
    </lineage>
</organism>
<keyword id="KW-0119">Carbohydrate metabolism</keyword>
<keyword id="KW-0963">Cytoplasm</keyword>
<keyword id="KW-0378">Hydrolase</keyword>
<keyword id="KW-0460">Magnesium</keyword>
<keyword id="KW-0479">Metal-binding</keyword>
<keyword id="KW-1185">Reference proteome</keyword>